<proteinExistence type="inferred from homology"/>
<sequence length="145" mass="16136">MLTVLQRVKEARVDIDGQTVGKINHGLLILCGFEPKDSLENIKRMLDKCINYRIFEDPSGKMNLSLKDVNGGLLLVPQFTLMADTQKGLRPSFSNAASPELGRELFDNLLTLAQKCHQNTQSGCFGANMQVYLCNDGPVTFLLQF</sequence>
<accession>Q5X472</accession>
<protein>
    <recommendedName>
        <fullName evidence="1">D-aminoacyl-tRNA deacylase</fullName>
        <shortName evidence="1">DTD</shortName>
        <ecNumber evidence="1">3.1.1.96</ecNumber>
    </recommendedName>
    <alternativeName>
        <fullName evidence="1">Gly-tRNA(Ala) deacylase</fullName>
    </alternativeName>
</protein>
<comment type="function">
    <text evidence="1">An aminoacyl-tRNA editing enzyme that deacylates mischarged D-aminoacyl-tRNAs. Also deacylates mischarged glycyl-tRNA(Ala), protecting cells against glycine mischarging by AlaRS. Acts via tRNA-based rather than protein-based catalysis; rejects L-amino acids rather than detecting D-amino acids in the active site. By recycling D-aminoacyl-tRNA to D-amino acids and free tRNA molecules, this enzyme counteracts the toxicity associated with the formation of D-aminoacyl-tRNA entities in vivo and helps enforce protein L-homochirality.</text>
</comment>
<comment type="catalytic activity">
    <reaction evidence="1">
        <text>glycyl-tRNA(Ala) + H2O = tRNA(Ala) + glycine + H(+)</text>
        <dbReference type="Rhea" id="RHEA:53744"/>
        <dbReference type="Rhea" id="RHEA-COMP:9657"/>
        <dbReference type="Rhea" id="RHEA-COMP:13640"/>
        <dbReference type="ChEBI" id="CHEBI:15377"/>
        <dbReference type="ChEBI" id="CHEBI:15378"/>
        <dbReference type="ChEBI" id="CHEBI:57305"/>
        <dbReference type="ChEBI" id="CHEBI:78442"/>
        <dbReference type="ChEBI" id="CHEBI:78522"/>
        <dbReference type="EC" id="3.1.1.96"/>
    </reaction>
</comment>
<comment type="catalytic activity">
    <reaction evidence="1">
        <text>a D-aminoacyl-tRNA + H2O = a tRNA + a D-alpha-amino acid + H(+)</text>
        <dbReference type="Rhea" id="RHEA:13953"/>
        <dbReference type="Rhea" id="RHEA-COMP:10123"/>
        <dbReference type="Rhea" id="RHEA-COMP:10124"/>
        <dbReference type="ChEBI" id="CHEBI:15377"/>
        <dbReference type="ChEBI" id="CHEBI:15378"/>
        <dbReference type="ChEBI" id="CHEBI:59871"/>
        <dbReference type="ChEBI" id="CHEBI:78442"/>
        <dbReference type="ChEBI" id="CHEBI:79333"/>
        <dbReference type="EC" id="3.1.1.96"/>
    </reaction>
</comment>
<comment type="subunit">
    <text evidence="1">Homodimer.</text>
</comment>
<comment type="subcellular location">
    <subcellularLocation>
        <location evidence="1">Cytoplasm</location>
    </subcellularLocation>
</comment>
<comment type="domain">
    <text evidence="1">A Gly-cisPro motif from one monomer fits into the active site of the other monomer to allow specific chiral rejection of L-amino acids.</text>
</comment>
<comment type="similarity">
    <text evidence="1">Belongs to the DTD family.</text>
</comment>
<feature type="chain" id="PRO_0000164552" description="D-aminoacyl-tRNA deacylase">
    <location>
        <begin position="1"/>
        <end position="145"/>
    </location>
</feature>
<feature type="short sequence motif" description="Gly-cisPro motif, important for rejection of L-amino acids" evidence="1">
    <location>
        <begin position="137"/>
        <end position="138"/>
    </location>
</feature>
<dbReference type="EC" id="3.1.1.96" evidence="1"/>
<dbReference type="EMBL" id="CR628336">
    <property type="protein sequence ID" value="CAH12960.1"/>
    <property type="molecule type" value="Genomic_DNA"/>
</dbReference>
<dbReference type="RefSeq" id="WP_010947570.1">
    <property type="nucleotide sequence ID" value="NC_006368.1"/>
</dbReference>
<dbReference type="SMR" id="Q5X472"/>
<dbReference type="GeneID" id="57035836"/>
<dbReference type="KEGG" id="lpp:lpp1808"/>
<dbReference type="LegioList" id="lpp1808"/>
<dbReference type="HOGENOM" id="CLU_076901_1_0_6"/>
<dbReference type="GO" id="GO:0005737">
    <property type="term" value="C:cytoplasm"/>
    <property type="evidence" value="ECO:0007669"/>
    <property type="project" value="UniProtKB-SubCell"/>
</dbReference>
<dbReference type="GO" id="GO:0051500">
    <property type="term" value="F:D-tyrosyl-tRNA(Tyr) deacylase activity"/>
    <property type="evidence" value="ECO:0007669"/>
    <property type="project" value="TreeGrafter"/>
</dbReference>
<dbReference type="GO" id="GO:0106026">
    <property type="term" value="F:Gly-tRNA(Ala) deacylase activity"/>
    <property type="evidence" value="ECO:0007669"/>
    <property type="project" value="UniProtKB-UniRule"/>
</dbReference>
<dbReference type="GO" id="GO:0043908">
    <property type="term" value="F:Ser(Gly)-tRNA(Ala) hydrolase activity"/>
    <property type="evidence" value="ECO:0007669"/>
    <property type="project" value="UniProtKB-UniRule"/>
</dbReference>
<dbReference type="GO" id="GO:0000049">
    <property type="term" value="F:tRNA binding"/>
    <property type="evidence" value="ECO:0007669"/>
    <property type="project" value="UniProtKB-UniRule"/>
</dbReference>
<dbReference type="GO" id="GO:0019478">
    <property type="term" value="P:D-amino acid catabolic process"/>
    <property type="evidence" value="ECO:0007669"/>
    <property type="project" value="UniProtKB-UniRule"/>
</dbReference>
<dbReference type="FunFam" id="3.50.80.10:FF:000001">
    <property type="entry name" value="D-aminoacyl-tRNA deacylase"/>
    <property type="match status" value="1"/>
</dbReference>
<dbReference type="Gene3D" id="3.50.80.10">
    <property type="entry name" value="D-tyrosyl-tRNA(Tyr) deacylase"/>
    <property type="match status" value="1"/>
</dbReference>
<dbReference type="HAMAP" id="MF_00518">
    <property type="entry name" value="Deacylase_Dtd"/>
    <property type="match status" value="1"/>
</dbReference>
<dbReference type="InterPro" id="IPR003732">
    <property type="entry name" value="Daa-tRNA_deacyls_DTD"/>
</dbReference>
<dbReference type="InterPro" id="IPR023509">
    <property type="entry name" value="DTD-like_sf"/>
</dbReference>
<dbReference type="NCBIfam" id="TIGR00256">
    <property type="entry name" value="D-aminoacyl-tRNA deacylase"/>
    <property type="match status" value="1"/>
</dbReference>
<dbReference type="PANTHER" id="PTHR10472:SF5">
    <property type="entry name" value="D-AMINOACYL-TRNA DEACYLASE 1"/>
    <property type="match status" value="1"/>
</dbReference>
<dbReference type="PANTHER" id="PTHR10472">
    <property type="entry name" value="D-TYROSYL-TRNA TYR DEACYLASE"/>
    <property type="match status" value="1"/>
</dbReference>
<dbReference type="Pfam" id="PF02580">
    <property type="entry name" value="Tyr_Deacylase"/>
    <property type="match status" value="1"/>
</dbReference>
<dbReference type="SUPFAM" id="SSF69500">
    <property type="entry name" value="DTD-like"/>
    <property type="match status" value="1"/>
</dbReference>
<evidence type="ECO:0000255" key="1">
    <source>
        <dbReference type="HAMAP-Rule" id="MF_00518"/>
    </source>
</evidence>
<reference key="1">
    <citation type="journal article" date="2004" name="Nat. Genet.">
        <title>Evidence in the Legionella pneumophila genome for exploitation of host cell functions and high genome plasticity.</title>
        <authorList>
            <person name="Cazalet C."/>
            <person name="Rusniok C."/>
            <person name="Brueggemann H."/>
            <person name="Zidane N."/>
            <person name="Magnier A."/>
            <person name="Ma L."/>
            <person name="Tichit M."/>
            <person name="Jarraud S."/>
            <person name="Bouchier C."/>
            <person name="Vandenesch F."/>
            <person name="Kunst F."/>
            <person name="Etienne J."/>
            <person name="Glaser P."/>
            <person name="Buchrieser C."/>
        </authorList>
    </citation>
    <scope>NUCLEOTIDE SEQUENCE [LARGE SCALE GENOMIC DNA]</scope>
    <source>
        <strain>Paris</strain>
    </source>
</reference>
<name>DTD_LEGPA</name>
<gene>
    <name evidence="1" type="primary">dtd</name>
    <name type="ordered locus">lpp1808</name>
</gene>
<organism>
    <name type="scientific">Legionella pneumophila (strain Paris)</name>
    <dbReference type="NCBI Taxonomy" id="297246"/>
    <lineage>
        <taxon>Bacteria</taxon>
        <taxon>Pseudomonadati</taxon>
        <taxon>Pseudomonadota</taxon>
        <taxon>Gammaproteobacteria</taxon>
        <taxon>Legionellales</taxon>
        <taxon>Legionellaceae</taxon>
        <taxon>Legionella</taxon>
    </lineage>
</organism>
<keyword id="KW-0963">Cytoplasm</keyword>
<keyword id="KW-0378">Hydrolase</keyword>
<keyword id="KW-0694">RNA-binding</keyword>
<keyword id="KW-0820">tRNA-binding</keyword>